<evidence type="ECO:0000255" key="1">
    <source>
        <dbReference type="HAMAP-Rule" id="MF_00451"/>
    </source>
</evidence>
<reference key="1">
    <citation type="submission" date="2007-06" db="EMBL/GenBank/DDBJ databases">
        <title>Complete sequence of chromosome of Staphylococcus aureus subsp. aureus JH1.</title>
        <authorList>
            <consortium name="US DOE Joint Genome Institute"/>
            <person name="Copeland A."/>
            <person name="Lucas S."/>
            <person name="Lapidus A."/>
            <person name="Barry K."/>
            <person name="Detter J.C."/>
            <person name="Glavina del Rio T."/>
            <person name="Hammon N."/>
            <person name="Israni S."/>
            <person name="Dalin E."/>
            <person name="Tice H."/>
            <person name="Pitluck S."/>
            <person name="Chain P."/>
            <person name="Malfatti S."/>
            <person name="Shin M."/>
            <person name="Vergez L."/>
            <person name="Schmutz J."/>
            <person name="Larimer F."/>
            <person name="Land M."/>
            <person name="Hauser L."/>
            <person name="Kyrpides N."/>
            <person name="Ivanova N."/>
            <person name="Tomasz A."/>
            <person name="Richardson P."/>
        </authorList>
    </citation>
    <scope>NUCLEOTIDE SEQUENCE [LARGE SCALE GENOMIC DNA]</scope>
    <source>
        <strain>JH1</strain>
    </source>
</reference>
<accession>A6U1T7</accession>
<name>NDK_STAA2</name>
<organism>
    <name type="scientific">Staphylococcus aureus (strain JH1)</name>
    <dbReference type="NCBI Taxonomy" id="359787"/>
    <lineage>
        <taxon>Bacteria</taxon>
        <taxon>Bacillati</taxon>
        <taxon>Bacillota</taxon>
        <taxon>Bacilli</taxon>
        <taxon>Bacillales</taxon>
        <taxon>Staphylococcaceae</taxon>
        <taxon>Staphylococcus</taxon>
    </lineage>
</organism>
<sequence length="149" mass="16575">MERTFLMIKPDAVQRNLIGEVISRIERKGLKLVGGKLMQVPMELAETHYGEHQGKPFYNDLISFITSAPVFAMVVEGEDAVNVSRHIIGSTNPSEASPGSIRGDLGLTVGRNIIHGSDSLESAEREINLWFNENEITSYASPRDAWLYE</sequence>
<comment type="function">
    <text evidence="1">Major role in the synthesis of nucleoside triphosphates other than ATP. The ATP gamma phosphate is transferred to the NDP beta phosphate via a ping-pong mechanism, using a phosphorylated active-site intermediate.</text>
</comment>
<comment type="catalytic activity">
    <reaction evidence="1">
        <text>a 2'-deoxyribonucleoside 5'-diphosphate + ATP = a 2'-deoxyribonucleoside 5'-triphosphate + ADP</text>
        <dbReference type="Rhea" id="RHEA:44640"/>
        <dbReference type="ChEBI" id="CHEBI:30616"/>
        <dbReference type="ChEBI" id="CHEBI:61560"/>
        <dbReference type="ChEBI" id="CHEBI:73316"/>
        <dbReference type="ChEBI" id="CHEBI:456216"/>
        <dbReference type="EC" id="2.7.4.6"/>
    </reaction>
</comment>
<comment type="catalytic activity">
    <reaction evidence="1">
        <text>a ribonucleoside 5'-diphosphate + ATP = a ribonucleoside 5'-triphosphate + ADP</text>
        <dbReference type="Rhea" id="RHEA:18113"/>
        <dbReference type="ChEBI" id="CHEBI:30616"/>
        <dbReference type="ChEBI" id="CHEBI:57930"/>
        <dbReference type="ChEBI" id="CHEBI:61557"/>
        <dbReference type="ChEBI" id="CHEBI:456216"/>
        <dbReference type="EC" id="2.7.4.6"/>
    </reaction>
</comment>
<comment type="cofactor">
    <cofactor evidence="1">
        <name>Mg(2+)</name>
        <dbReference type="ChEBI" id="CHEBI:18420"/>
    </cofactor>
</comment>
<comment type="subunit">
    <text evidence="1">Homotetramer.</text>
</comment>
<comment type="subcellular location">
    <subcellularLocation>
        <location evidence="1">Cytoplasm</location>
    </subcellularLocation>
</comment>
<comment type="similarity">
    <text evidence="1">Belongs to the NDK family.</text>
</comment>
<feature type="chain" id="PRO_1000080981" description="Nucleoside diphosphate kinase">
    <location>
        <begin position="1"/>
        <end position="149"/>
    </location>
</feature>
<feature type="active site" description="Pros-phosphohistidine intermediate" evidence="1">
    <location>
        <position position="115"/>
    </location>
</feature>
<feature type="binding site" evidence="1">
    <location>
        <position position="9"/>
    </location>
    <ligand>
        <name>ATP</name>
        <dbReference type="ChEBI" id="CHEBI:30616"/>
    </ligand>
</feature>
<feature type="binding site" evidence="1">
    <location>
        <position position="57"/>
    </location>
    <ligand>
        <name>ATP</name>
        <dbReference type="ChEBI" id="CHEBI:30616"/>
    </ligand>
</feature>
<feature type="binding site" evidence="1">
    <location>
        <position position="85"/>
    </location>
    <ligand>
        <name>ATP</name>
        <dbReference type="ChEBI" id="CHEBI:30616"/>
    </ligand>
</feature>
<feature type="binding site" evidence="1">
    <location>
        <position position="91"/>
    </location>
    <ligand>
        <name>ATP</name>
        <dbReference type="ChEBI" id="CHEBI:30616"/>
    </ligand>
</feature>
<feature type="binding site" evidence="1">
    <location>
        <position position="102"/>
    </location>
    <ligand>
        <name>ATP</name>
        <dbReference type="ChEBI" id="CHEBI:30616"/>
    </ligand>
</feature>
<feature type="binding site" evidence="1">
    <location>
        <position position="112"/>
    </location>
    <ligand>
        <name>ATP</name>
        <dbReference type="ChEBI" id="CHEBI:30616"/>
    </ligand>
</feature>
<dbReference type="EC" id="2.7.4.6" evidence="1"/>
<dbReference type="EMBL" id="CP000736">
    <property type="protein sequence ID" value="ABR52405.1"/>
    <property type="molecule type" value="Genomic_DNA"/>
</dbReference>
<dbReference type="SMR" id="A6U1T7"/>
<dbReference type="KEGG" id="sah:SaurJH1_1556"/>
<dbReference type="HOGENOM" id="CLU_060216_6_3_9"/>
<dbReference type="GO" id="GO:0005737">
    <property type="term" value="C:cytoplasm"/>
    <property type="evidence" value="ECO:0007669"/>
    <property type="project" value="UniProtKB-SubCell"/>
</dbReference>
<dbReference type="GO" id="GO:0005524">
    <property type="term" value="F:ATP binding"/>
    <property type="evidence" value="ECO:0007669"/>
    <property type="project" value="UniProtKB-UniRule"/>
</dbReference>
<dbReference type="GO" id="GO:0046872">
    <property type="term" value="F:metal ion binding"/>
    <property type="evidence" value="ECO:0007669"/>
    <property type="project" value="UniProtKB-KW"/>
</dbReference>
<dbReference type="GO" id="GO:0004550">
    <property type="term" value="F:nucleoside diphosphate kinase activity"/>
    <property type="evidence" value="ECO:0007669"/>
    <property type="project" value="UniProtKB-UniRule"/>
</dbReference>
<dbReference type="GO" id="GO:0006241">
    <property type="term" value="P:CTP biosynthetic process"/>
    <property type="evidence" value="ECO:0007669"/>
    <property type="project" value="UniProtKB-UniRule"/>
</dbReference>
<dbReference type="GO" id="GO:0006183">
    <property type="term" value="P:GTP biosynthetic process"/>
    <property type="evidence" value="ECO:0007669"/>
    <property type="project" value="UniProtKB-UniRule"/>
</dbReference>
<dbReference type="GO" id="GO:0006228">
    <property type="term" value="P:UTP biosynthetic process"/>
    <property type="evidence" value="ECO:0007669"/>
    <property type="project" value="UniProtKB-UniRule"/>
</dbReference>
<dbReference type="CDD" id="cd04413">
    <property type="entry name" value="NDPk_I"/>
    <property type="match status" value="1"/>
</dbReference>
<dbReference type="FunFam" id="3.30.70.141:FF:000002">
    <property type="entry name" value="Nucleoside diphosphate kinase"/>
    <property type="match status" value="1"/>
</dbReference>
<dbReference type="Gene3D" id="3.30.70.141">
    <property type="entry name" value="Nucleoside diphosphate kinase-like domain"/>
    <property type="match status" value="1"/>
</dbReference>
<dbReference type="HAMAP" id="MF_00451">
    <property type="entry name" value="NDP_kinase"/>
    <property type="match status" value="1"/>
</dbReference>
<dbReference type="InterPro" id="IPR034907">
    <property type="entry name" value="NDK-like_dom"/>
</dbReference>
<dbReference type="InterPro" id="IPR036850">
    <property type="entry name" value="NDK-like_dom_sf"/>
</dbReference>
<dbReference type="InterPro" id="IPR001564">
    <property type="entry name" value="Nucleoside_diP_kinase"/>
</dbReference>
<dbReference type="InterPro" id="IPR023005">
    <property type="entry name" value="Nucleoside_diP_kinase_AS"/>
</dbReference>
<dbReference type="NCBIfam" id="NF001908">
    <property type="entry name" value="PRK00668.1"/>
    <property type="match status" value="1"/>
</dbReference>
<dbReference type="PANTHER" id="PTHR11349">
    <property type="entry name" value="NUCLEOSIDE DIPHOSPHATE KINASE"/>
    <property type="match status" value="1"/>
</dbReference>
<dbReference type="Pfam" id="PF00334">
    <property type="entry name" value="NDK"/>
    <property type="match status" value="1"/>
</dbReference>
<dbReference type="PRINTS" id="PR01243">
    <property type="entry name" value="NUCDPKINASE"/>
</dbReference>
<dbReference type="SMART" id="SM00562">
    <property type="entry name" value="NDK"/>
    <property type="match status" value="1"/>
</dbReference>
<dbReference type="SUPFAM" id="SSF54919">
    <property type="entry name" value="Nucleoside diphosphate kinase, NDK"/>
    <property type="match status" value="1"/>
</dbReference>
<dbReference type="PROSITE" id="PS00469">
    <property type="entry name" value="NDPK"/>
    <property type="match status" value="1"/>
</dbReference>
<dbReference type="PROSITE" id="PS51374">
    <property type="entry name" value="NDPK_LIKE"/>
    <property type="match status" value="1"/>
</dbReference>
<gene>
    <name evidence="1" type="primary">ndk</name>
    <name type="ordered locus">SaurJH1_1556</name>
</gene>
<proteinExistence type="inferred from homology"/>
<protein>
    <recommendedName>
        <fullName evidence="1">Nucleoside diphosphate kinase</fullName>
        <shortName evidence="1">NDK</shortName>
        <shortName evidence="1">NDP kinase</shortName>
        <ecNumber evidence="1">2.7.4.6</ecNumber>
    </recommendedName>
    <alternativeName>
        <fullName evidence="1">Nucleoside-2-P kinase</fullName>
    </alternativeName>
</protein>
<keyword id="KW-0067">ATP-binding</keyword>
<keyword id="KW-0963">Cytoplasm</keyword>
<keyword id="KW-0418">Kinase</keyword>
<keyword id="KW-0460">Magnesium</keyword>
<keyword id="KW-0479">Metal-binding</keyword>
<keyword id="KW-0546">Nucleotide metabolism</keyword>
<keyword id="KW-0547">Nucleotide-binding</keyword>
<keyword id="KW-0597">Phosphoprotein</keyword>
<keyword id="KW-0808">Transferase</keyword>